<dbReference type="EMBL" id="AJ252133">
    <property type="protein sequence ID" value="CAC19851.1"/>
    <property type="molecule type" value="mRNA"/>
</dbReference>
<dbReference type="EMBL" id="AC021665">
    <property type="protein sequence ID" value="AAG52226.1"/>
    <property type="molecule type" value="Genomic_DNA"/>
</dbReference>
<dbReference type="EMBL" id="CP002684">
    <property type="protein sequence ID" value="AEE35248.1"/>
    <property type="molecule type" value="Genomic_DNA"/>
</dbReference>
<dbReference type="PIR" id="F96741">
    <property type="entry name" value="F96741"/>
</dbReference>
<dbReference type="RefSeq" id="NP_177334.1">
    <property type="nucleotide sequence ID" value="NM_105847.3"/>
</dbReference>
<dbReference type="SMR" id="Q9C8X2"/>
<dbReference type="FunCoup" id="Q9C8X2">
    <property type="interactions" value="808"/>
</dbReference>
<dbReference type="STRING" id="3702.Q9C8X2"/>
<dbReference type="TCDB" id="2.A.2.4.12">
    <property type="family name" value="the glycoside-pentoside-hexuronide (gph):cation symporter family"/>
</dbReference>
<dbReference type="iPTMnet" id="Q9C8X2"/>
<dbReference type="PaxDb" id="3702-AT1G71890.1"/>
<dbReference type="ProteomicsDB" id="245353"/>
<dbReference type="EnsemblPlants" id="AT1G71890.1">
    <property type="protein sequence ID" value="AT1G71890.1"/>
    <property type="gene ID" value="AT1G71890"/>
</dbReference>
<dbReference type="GeneID" id="843520"/>
<dbReference type="Gramene" id="AT1G71890.1">
    <property type="protein sequence ID" value="AT1G71890.1"/>
    <property type="gene ID" value="AT1G71890"/>
</dbReference>
<dbReference type="KEGG" id="ath:AT1G71890"/>
<dbReference type="Araport" id="AT1G71890"/>
<dbReference type="TAIR" id="AT1G71890">
    <property type="gene designation" value="SUC5"/>
</dbReference>
<dbReference type="eggNOG" id="KOG0637">
    <property type="taxonomic scope" value="Eukaryota"/>
</dbReference>
<dbReference type="HOGENOM" id="CLU_025234_3_0_1"/>
<dbReference type="InParanoid" id="Q9C8X2"/>
<dbReference type="OMA" id="RYNNGTQ"/>
<dbReference type="PhylomeDB" id="Q9C8X2"/>
<dbReference type="SABIO-RK" id="Q9C8X2"/>
<dbReference type="UniPathway" id="UPA00238"/>
<dbReference type="PRO" id="PR:Q9C8X2"/>
<dbReference type="Proteomes" id="UP000006548">
    <property type="component" value="Chromosome 1"/>
</dbReference>
<dbReference type="ExpressionAtlas" id="Q9C8X2">
    <property type="expression patterns" value="baseline and differential"/>
</dbReference>
<dbReference type="GO" id="GO:0005886">
    <property type="term" value="C:plasma membrane"/>
    <property type="evidence" value="ECO:0000314"/>
    <property type="project" value="UniProtKB"/>
</dbReference>
<dbReference type="GO" id="GO:0009506">
    <property type="term" value="C:plasmodesma"/>
    <property type="evidence" value="ECO:0007005"/>
    <property type="project" value="TAIR"/>
</dbReference>
<dbReference type="GO" id="GO:0015225">
    <property type="term" value="F:biotin transmembrane transporter activity"/>
    <property type="evidence" value="ECO:0000315"/>
    <property type="project" value="UniProtKB"/>
</dbReference>
<dbReference type="GO" id="GO:0008515">
    <property type="term" value="F:sucrose transmembrane transporter activity"/>
    <property type="evidence" value="ECO:0007669"/>
    <property type="project" value="InterPro"/>
</dbReference>
<dbReference type="GO" id="GO:0015293">
    <property type="term" value="F:symporter activity"/>
    <property type="evidence" value="ECO:0007669"/>
    <property type="project" value="UniProtKB-KW"/>
</dbReference>
<dbReference type="GO" id="GO:0048316">
    <property type="term" value="P:seed development"/>
    <property type="evidence" value="ECO:0000315"/>
    <property type="project" value="UniProtKB"/>
</dbReference>
<dbReference type="GO" id="GO:0005985">
    <property type="term" value="P:sucrose metabolic process"/>
    <property type="evidence" value="ECO:0007669"/>
    <property type="project" value="UniProtKB-UniPathway"/>
</dbReference>
<dbReference type="CDD" id="cd17313">
    <property type="entry name" value="MFS_SLC45_SUC"/>
    <property type="match status" value="1"/>
</dbReference>
<dbReference type="FunFam" id="1.20.1250.20:FF:000174">
    <property type="entry name" value="Sucrose transport protein"/>
    <property type="match status" value="1"/>
</dbReference>
<dbReference type="Gene3D" id="1.20.1250.20">
    <property type="entry name" value="MFS general substrate transporter like domains"/>
    <property type="match status" value="1"/>
</dbReference>
<dbReference type="InterPro" id="IPR036259">
    <property type="entry name" value="MFS_trans_sf"/>
</dbReference>
<dbReference type="InterPro" id="IPR005989">
    <property type="entry name" value="Suc_symporter_pln"/>
</dbReference>
<dbReference type="NCBIfam" id="TIGR01301">
    <property type="entry name" value="GPH_sucrose"/>
    <property type="match status" value="1"/>
</dbReference>
<dbReference type="PANTHER" id="PTHR19432:SF70">
    <property type="entry name" value="SUCROSE TRANSPORT PROTEIN SUC1-RELATED"/>
    <property type="match status" value="1"/>
</dbReference>
<dbReference type="PANTHER" id="PTHR19432">
    <property type="entry name" value="SUGAR TRANSPORTER"/>
    <property type="match status" value="1"/>
</dbReference>
<dbReference type="Pfam" id="PF13347">
    <property type="entry name" value="MFS_2"/>
    <property type="match status" value="1"/>
</dbReference>
<dbReference type="SUPFAM" id="SSF103473">
    <property type="entry name" value="MFS general substrate transporter"/>
    <property type="match status" value="1"/>
</dbReference>
<keyword id="KW-1003">Cell membrane</keyword>
<keyword id="KW-0472">Membrane</keyword>
<keyword id="KW-0597">Phosphoprotein</keyword>
<keyword id="KW-1185">Reference proteome</keyword>
<keyword id="KW-0762">Sugar transport</keyword>
<keyword id="KW-0769">Symport</keyword>
<keyword id="KW-0812">Transmembrane</keyword>
<keyword id="KW-1133">Transmembrane helix</keyword>
<keyword id="KW-0813">Transport</keyword>
<evidence type="ECO:0000250" key="1">
    <source>
        <dbReference type="UniProtKB" id="Q39232"/>
    </source>
</evidence>
<evidence type="ECO:0000255" key="2"/>
<evidence type="ECO:0000256" key="3">
    <source>
        <dbReference type="SAM" id="MobiDB-lite"/>
    </source>
</evidence>
<evidence type="ECO:0000269" key="4">
    <source>
    </source>
</evidence>
<evidence type="ECO:0000269" key="5">
    <source>
    </source>
</evidence>
<evidence type="ECO:0000269" key="6">
    <source>
    </source>
</evidence>
<evidence type="ECO:0000303" key="7">
    <source>
    </source>
</evidence>
<evidence type="ECO:0000303" key="8">
    <source>
    </source>
</evidence>
<evidence type="ECO:0000305" key="9"/>
<evidence type="ECO:0000305" key="10">
    <source>
    </source>
</evidence>
<evidence type="ECO:0000312" key="11">
    <source>
        <dbReference type="Araport" id="AT1G71890"/>
    </source>
</evidence>
<evidence type="ECO:0000312" key="12">
    <source>
        <dbReference type="EMBL" id="AAG52226.1"/>
    </source>
</evidence>
<protein>
    <recommendedName>
        <fullName evidence="7">Sucrose transport protein SUC5</fullName>
        <shortName evidence="8">AtSUC5</shortName>
    </recommendedName>
    <alternativeName>
        <fullName>Sucrose permease 5</fullName>
    </alternativeName>
    <alternativeName>
        <fullName evidence="7">Sucrose-proton symporter 5</fullName>
    </alternativeName>
</protein>
<organism>
    <name type="scientific">Arabidopsis thaliana</name>
    <name type="common">Mouse-ear cress</name>
    <dbReference type="NCBI Taxonomy" id="3702"/>
    <lineage>
        <taxon>Eukaryota</taxon>
        <taxon>Viridiplantae</taxon>
        <taxon>Streptophyta</taxon>
        <taxon>Embryophyta</taxon>
        <taxon>Tracheophyta</taxon>
        <taxon>Spermatophyta</taxon>
        <taxon>Magnoliopsida</taxon>
        <taxon>eudicotyledons</taxon>
        <taxon>Gunneridae</taxon>
        <taxon>Pentapetalae</taxon>
        <taxon>rosids</taxon>
        <taxon>malvids</taxon>
        <taxon>Brassicales</taxon>
        <taxon>Brassicaceae</taxon>
        <taxon>Camelineae</taxon>
        <taxon>Arabidopsis</taxon>
    </lineage>
</organism>
<feature type="chain" id="PRO_0000122526" description="Sucrose transport protein SUC5">
    <location>
        <begin position="1"/>
        <end position="512"/>
    </location>
</feature>
<feature type="topological domain" description="Cytoplasmic" evidence="2">
    <location>
        <begin position="1"/>
        <end position="33"/>
    </location>
</feature>
<feature type="transmembrane region" description="Helical" evidence="2">
    <location>
        <begin position="34"/>
        <end position="54"/>
    </location>
</feature>
<feature type="topological domain" description="Extracellular" evidence="2">
    <location>
        <begin position="55"/>
        <end position="67"/>
    </location>
</feature>
<feature type="transmembrane region" description="Helical" evidence="2">
    <location>
        <begin position="68"/>
        <end position="88"/>
    </location>
</feature>
<feature type="topological domain" description="Cytoplasmic" evidence="2">
    <location>
        <begin position="89"/>
        <end position="102"/>
    </location>
</feature>
<feature type="transmembrane region" description="Helical" evidence="2">
    <location>
        <begin position="103"/>
        <end position="123"/>
    </location>
</feature>
<feature type="topological domain" description="Extracellular" evidence="2">
    <location>
        <begin position="124"/>
        <end position="140"/>
    </location>
</feature>
<feature type="transmembrane region" description="Helical" evidence="2">
    <location>
        <begin position="141"/>
        <end position="161"/>
    </location>
</feature>
<feature type="topological domain" description="Cytoplasmic" evidence="2">
    <location>
        <begin position="162"/>
        <end position="179"/>
    </location>
</feature>
<feature type="transmembrane region" description="Helical" evidence="2">
    <location>
        <begin position="180"/>
        <end position="200"/>
    </location>
</feature>
<feature type="topological domain" description="Extracellular" evidence="2">
    <location>
        <begin position="201"/>
        <end position="225"/>
    </location>
</feature>
<feature type="transmembrane region" description="Helical" evidence="2">
    <location>
        <begin position="226"/>
        <end position="246"/>
    </location>
</feature>
<feature type="topological domain" description="Cytoplasmic" evidence="2">
    <location>
        <begin position="247"/>
        <end position="281"/>
    </location>
</feature>
<feature type="transmembrane region" description="Helical" evidence="2">
    <location>
        <begin position="282"/>
        <end position="302"/>
    </location>
</feature>
<feature type="topological domain" description="Extracellular" evidence="2">
    <location>
        <begin position="303"/>
        <end position="333"/>
    </location>
</feature>
<feature type="transmembrane region" description="Helical" evidence="2">
    <location>
        <begin position="334"/>
        <end position="354"/>
    </location>
</feature>
<feature type="topological domain" description="Cytoplasmic" evidence="2">
    <location>
        <begin position="355"/>
        <end position="363"/>
    </location>
</feature>
<feature type="transmembrane region" description="Helical" evidence="2">
    <location>
        <begin position="364"/>
        <end position="384"/>
    </location>
</feature>
<feature type="topological domain" description="Extracellular" evidence="2">
    <location>
        <begin position="385"/>
        <end position="406"/>
    </location>
</feature>
<feature type="transmembrane region" description="Helical" evidence="2">
    <location>
        <begin position="407"/>
        <end position="427"/>
    </location>
</feature>
<feature type="topological domain" description="Cytoplasmic" evidence="2">
    <location>
        <begin position="428"/>
        <end position="440"/>
    </location>
</feature>
<feature type="transmembrane region" description="Helical" evidence="2">
    <location>
        <begin position="441"/>
        <end position="461"/>
    </location>
</feature>
<feature type="topological domain" description="Extracellular" evidence="2">
    <location>
        <begin position="462"/>
        <end position="473"/>
    </location>
</feature>
<feature type="transmembrane region" description="Helical" evidence="2">
    <location>
        <begin position="474"/>
        <end position="494"/>
    </location>
</feature>
<feature type="topological domain" description="Cytoplasmic" evidence="2">
    <location>
        <begin position="495"/>
        <end position="512"/>
    </location>
</feature>
<feature type="region of interest" description="Disordered" evidence="3">
    <location>
        <begin position="1"/>
        <end position="27"/>
    </location>
</feature>
<feature type="compositionally biased region" description="Polar residues" evidence="3">
    <location>
        <begin position="11"/>
        <end position="22"/>
    </location>
</feature>
<feature type="modified residue" description="Phosphoserine" evidence="1">
    <location>
        <position position="20"/>
    </location>
</feature>
<feature type="sequence conflict" description="In Ref. 1; CAC19851." evidence="9" ref="1">
    <original>G</original>
    <variation>S</variation>
    <location>
        <position position="26"/>
    </location>
</feature>
<feature type="sequence conflict" description="In Ref. 1; CAC19851." evidence="9" ref="1">
    <original>V</original>
    <variation>I</variation>
    <location>
        <position position="486"/>
    </location>
</feature>
<feature type="sequence conflict" description="In Ref. 1; CAC19851." evidence="9" ref="1">
    <location>
        <begin position="510"/>
        <end position="512"/>
    </location>
</feature>
<comment type="function">
    <text evidence="4 5 6">Responsible in a heterologous system for the transport of sucrose into the cell, with the concomitant uptake of protons (symport system). Can also transport biotin, and probably maltose at a lesser rate. In planta, the role of SUC5 for the transport of sucrose seems to be negligible. Plays a role in the nutrition of the filial tissues during early seed development and is probably involved in the import of biotin into the endosperm and the embryo epidermis.</text>
</comment>
<comment type="catalytic activity">
    <reaction evidence="4">
        <text>sucrose(out) + H(+)(out) = sucrose(in) + H(+)(in)</text>
        <dbReference type="Rhea" id="RHEA:72187"/>
        <dbReference type="ChEBI" id="CHEBI:15378"/>
        <dbReference type="ChEBI" id="CHEBI:17992"/>
    </reaction>
    <physiologicalReaction direction="left-to-right" evidence="4">
        <dbReference type="Rhea" id="RHEA:72188"/>
    </physiologicalReaction>
</comment>
<comment type="activity regulation">
    <text evidence="4">Inhibited by protonophores (e.g. carbonyl cyanide m-chlorophenyl-hydrazone (CCCP)) and SH group inhibitors (e.g. p-chloromercuribenzene sulphonic acid (PCMBS)).</text>
</comment>
<comment type="biophysicochemical properties">
    <kinetics>
        <KM evidence="4">1 mM for sucrose (at pH 5.5 and 30 degrees Celsius)</KM>
        <text evidence="4">KM for biotin could not determined because the concentration of biotin needed to saturate the transporter was slightly below the upper limit of biotin solubility in water.</text>
    </kinetics>
</comment>
<comment type="pathway">
    <text>Glycan biosynthesis; sucrose metabolism.</text>
</comment>
<comment type="subcellular location">
    <subcellularLocation>
        <location evidence="10">Cell membrane</location>
        <topology evidence="10">Multi-pass membrane protein</topology>
    </subcellularLocation>
</comment>
<comment type="tissue specificity">
    <text evidence="4 6">Widely expressed. Expressed in the endosperm and on the epidermis of the outer surface of the cotyledons of torpedo-stage or older embryos.</text>
</comment>
<comment type="developmental stage">
    <text evidence="5 6">Expressed in developing seeds 3 to 4 days after flowering (DAF) in the micropylar region of the endosperm. At 6 DAF, expressed the micropylar pole. At the globular stage of embryo development, expressed specifically in the endosperm and then extends to the chalazal pole of the endosperm at the torpedo stage. The expression decreases at the upturned-U stage, 9 DAF, as the endosperm becomes limited to a few cell layers embedding the maturing embryo. Expressed in the embryo at the later stages of development.</text>
</comment>
<comment type="disruption phenotype">
    <text evidence="5">Significant but transient reduction in fatty acid concentration in developing seeds. Slight delay in embryo development.</text>
</comment>
<comment type="similarity">
    <text evidence="9">Belongs to the glycoside-pentoside-hexuronide (GPH) cation symporter transporter (TC 2.A.2.4) family.</text>
</comment>
<reference key="1">
    <citation type="journal article" date="2000" name="Plant J.">
        <title>Plant sucrose-H(+) symporters mediate the transport of vitamin H.</title>
        <authorList>
            <person name="Ludwig A."/>
            <person name="Stolz J."/>
            <person name="Sauer N."/>
        </authorList>
    </citation>
    <scope>NUCLEOTIDE SEQUENCE [MRNA]</scope>
    <scope>FUNCTION</scope>
    <scope>BIOPHYSICOCHEMICAL PROPERTIES</scope>
    <scope>ACTIVITY REGULATION</scope>
    <scope>TISSUE SPECIFICITY</scope>
    <scope>TRANSPORTER ACTIVITY</scope>
    <source>
        <strain>cv. Landsberg erecta</strain>
        <tissue>Seedling</tissue>
    </source>
</reference>
<reference key="2">
    <citation type="journal article" date="2000" name="Nature">
        <title>Sequence and analysis of chromosome 1 of the plant Arabidopsis thaliana.</title>
        <authorList>
            <person name="Theologis A."/>
            <person name="Ecker J.R."/>
            <person name="Palm C.J."/>
            <person name="Federspiel N.A."/>
            <person name="Kaul S."/>
            <person name="White O."/>
            <person name="Alonso J."/>
            <person name="Altafi H."/>
            <person name="Araujo R."/>
            <person name="Bowman C.L."/>
            <person name="Brooks S.Y."/>
            <person name="Buehler E."/>
            <person name="Chan A."/>
            <person name="Chao Q."/>
            <person name="Chen H."/>
            <person name="Cheuk R.F."/>
            <person name="Chin C.W."/>
            <person name="Chung M.K."/>
            <person name="Conn L."/>
            <person name="Conway A.B."/>
            <person name="Conway A.R."/>
            <person name="Creasy T.H."/>
            <person name="Dewar K."/>
            <person name="Dunn P."/>
            <person name="Etgu P."/>
            <person name="Feldblyum T.V."/>
            <person name="Feng J.-D."/>
            <person name="Fong B."/>
            <person name="Fujii C.Y."/>
            <person name="Gill J.E."/>
            <person name="Goldsmith A.D."/>
            <person name="Haas B."/>
            <person name="Hansen N.F."/>
            <person name="Hughes B."/>
            <person name="Huizar L."/>
            <person name="Hunter J.L."/>
            <person name="Jenkins J."/>
            <person name="Johnson-Hopson C."/>
            <person name="Khan S."/>
            <person name="Khaykin E."/>
            <person name="Kim C.J."/>
            <person name="Koo H.L."/>
            <person name="Kremenetskaia I."/>
            <person name="Kurtz D.B."/>
            <person name="Kwan A."/>
            <person name="Lam B."/>
            <person name="Langin-Hooper S."/>
            <person name="Lee A."/>
            <person name="Lee J.M."/>
            <person name="Lenz C.A."/>
            <person name="Li J.H."/>
            <person name="Li Y.-P."/>
            <person name="Lin X."/>
            <person name="Liu S.X."/>
            <person name="Liu Z.A."/>
            <person name="Luros J.S."/>
            <person name="Maiti R."/>
            <person name="Marziali A."/>
            <person name="Militscher J."/>
            <person name="Miranda M."/>
            <person name="Nguyen M."/>
            <person name="Nierman W.C."/>
            <person name="Osborne B.I."/>
            <person name="Pai G."/>
            <person name="Peterson J."/>
            <person name="Pham P.K."/>
            <person name="Rizzo M."/>
            <person name="Rooney T."/>
            <person name="Rowley D."/>
            <person name="Sakano H."/>
            <person name="Salzberg S.L."/>
            <person name="Schwartz J.R."/>
            <person name="Shinn P."/>
            <person name="Southwick A.M."/>
            <person name="Sun H."/>
            <person name="Tallon L.J."/>
            <person name="Tambunga G."/>
            <person name="Toriumi M.J."/>
            <person name="Town C.D."/>
            <person name="Utterback T."/>
            <person name="Van Aken S."/>
            <person name="Vaysberg M."/>
            <person name="Vysotskaia V.S."/>
            <person name="Walker M."/>
            <person name="Wu D."/>
            <person name="Yu G."/>
            <person name="Fraser C.M."/>
            <person name="Venter J.C."/>
            <person name="Davis R.W."/>
        </authorList>
    </citation>
    <scope>NUCLEOTIDE SEQUENCE [LARGE SCALE GENOMIC DNA]</scope>
    <source>
        <strain>cv. Columbia</strain>
    </source>
</reference>
<reference key="3">
    <citation type="journal article" date="2017" name="Plant J.">
        <title>Araport11: a complete reannotation of the Arabidopsis thaliana reference genome.</title>
        <authorList>
            <person name="Cheng C.Y."/>
            <person name="Krishnakumar V."/>
            <person name="Chan A.P."/>
            <person name="Thibaud-Nissen F."/>
            <person name="Schobel S."/>
            <person name="Town C.D."/>
        </authorList>
    </citation>
    <scope>GENOME REANNOTATION</scope>
    <source>
        <strain>cv. Columbia</strain>
    </source>
</reference>
<reference key="4">
    <citation type="journal article" date="2005" name="Plant J.">
        <title>The AtSUC5 sucrose transporter specifically expressed in the endosperm is involved in early seed development in Arabidopsis.</title>
        <authorList>
            <person name="Baud S."/>
            <person name="Wuilleme S."/>
            <person name="Lemoine R."/>
            <person name="Kronenberger J."/>
            <person name="Caboche M."/>
            <person name="Lepiniec L."/>
            <person name="Rochat C."/>
        </authorList>
    </citation>
    <scope>FUNCTION</scope>
    <scope>DEVELOPMENTAL STAGE</scope>
    <scope>DISRUPTION PHENOTYPE</scope>
    <source>
        <strain>cv. Wassilewskija</strain>
    </source>
</reference>
<reference key="5">
    <citation type="journal article" date="2013" name="Plant J.">
        <title>SUCROSE TRANSPORTER 5 supplies Arabidopsis embryos with biotin and affects triacylglycerol accumulation.</title>
        <authorList>
            <person name="Pommerrenig B."/>
            <person name="Popko J."/>
            <person name="Heilmann M."/>
            <person name="Schulmeister S."/>
            <person name="Dietel K."/>
            <person name="Schmitt B."/>
            <person name="Stadler R."/>
            <person name="Feussner I."/>
            <person name="Sauer N."/>
        </authorList>
    </citation>
    <scope>FUNCTION</scope>
    <scope>SUBCELLULAR LOCATION</scope>
    <scope>TISSUE SPECIFICITY</scope>
    <scope>DEVELOPMENTAL STAGE</scope>
    <source>
        <strain>cv. Columbia</strain>
    </source>
</reference>
<gene>
    <name evidence="7" type="primary">SUC5</name>
    <name evidence="11" type="ordered locus">At1g71890</name>
    <name evidence="12" type="ORF">F17M19.4</name>
</gene>
<sequence length="512" mass="54834">MGALEAERAANNATALETQSSPEDLGQPSPLRKIISVASIAAGVQFGWALQLSLLTPYIQLLGIPHKWSSYMWLCGPISGMIVQPIVGYHSDRCESRFGRRRPFIAAGVALVAVSVFLIGFAADMGHSFGDKLENKVRTRAIIIFLTGFWFLDVANNTLQGPCRAFLADLAAGDAKKTRVANACFSFFMAVGNVLGYAAGSYTNLHKMFPFTMTKACDIYCANLKTCFFLSITLLLIVTFSSLWYVKDKQWSPPQGDKEEKTSSLFFFGEIFGAVRHMKRPMVMLLIVTVINWIAWFPFILYDTDWMGREVYGGNSDGDERSKKLYDQGVQAGALGLMFNSILLGFVSLGVESIGRKMGGAKRLWGCVNFILAIGLAMTVLVTKSAEHHREIAGPLAGPSSGIKAGVFSLFTVLGIPLAITYSIPFALASIFSTNSGAGQGLSLGVLNIAICIPQMIVSFSSGPLDAQFGGGNLPSFVVGAIAAAVSGVLALTVLPSPPPDAPAMSGAMGFH</sequence>
<proteinExistence type="evidence at protein level"/>
<name>SUC5_ARATH</name>
<accession>Q9C8X2</accession>
<accession>Q9FNY9</accession>